<name>RTC5_ASPFN</name>
<dbReference type="EMBL" id="EQ963475">
    <property type="protein sequence ID" value="EED53794.1"/>
    <property type="molecule type" value="Genomic_DNA"/>
</dbReference>
<dbReference type="RefSeq" id="XP_002377040.1">
    <property type="nucleotide sequence ID" value="XM_002376999.1"/>
</dbReference>
<dbReference type="SMR" id="B8N9M5"/>
<dbReference type="STRING" id="332952.B8N9M5"/>
<dbReference type="EnsemblFungi" id="EED53794">
    <property type="protein sequence ID" value="EED53794"/>
    <property type="gene ID" value="AFLA_111710"/>
</dbReference>
<dbReference type="VEuPathDB" id="FungiDB:AFLA_007107"/>
<dbReference type="eggNOG" id="ENOG502QV3R">
    <property type="taxonomic scope" value="Eukaryota"/>
</dbReference>
<dbReference type="HOGENOM" id="CLU_011918_1_0_1"/>
<dbReference type="OMA" id="KWEFEAR"/>
<dbReference type="GO" id="GO:0005737">
    <property type="term" value="C:cytoplasm"/>
    <property type="evidence" value="ECO:0007669"/>
    <property type="project" value="UniProtKB-SubCell"/>
</dbReference>
<dbReference type="InterPro" id="IPR006571">
    <property type="entry name" value="TLDc_dom"/>
</dbReference>
<dbReference type="Pfam" id="PF07534">
    <property type="entry name" value="TLD"/>
    <property type="match status" value="1"/>
</dbReference>
<dbReference type="SMART" id="SM00584">
    <property type="entry name" value="TLDc"/>
    <property type="match status" value="1"/>
</dbReference>
<dbReference type="PROSITE" id="PS51886">
    <property type="entry name" value="TLDC"/>
    <property type="match status" value="1"/>
</dbReference>
<proteinExistence type="inferred from homology"/>
<sequence length="629" mass="68502">MGLSQSTELGQASSPEELSHMLAERFATKCFTPLELTHFKDNFFTRAAGQGDVKYWNEKILSDFLAIPDSSDAECPLDAGPVIFRMVSYLGAFPFQNTLAPSVLTFEAMVKVVVLLTERYGKVLRRARKDRIRLLFGSLADVGRKDIDQPANDGNSKEDKVDSSATKSHAPGFSVDEPTNDDYEDDDDDLALAALESLDAIEVFRHDSRIDKAVYEARISIATFRRLLMLLLVISPLRPLEPVKAYTSDLNEGRMRTVRQQADNILAAFPQEESGGISYRAFAKTIETSLPYLFDPLTPLFEHLLFSRNLNLSQKRDRSDSTDPTDQTSETPLPLSASIMLPGSFESAILNPSIVSHLSFFLPSTNGSKNLLRDNLRLHPIFSTAAHGSSLTSFSHNVLTWQSGTLLLLEGAVAEPSGEQMVTLGAYLPQPWKTGSSAQSSRLSETSALPCLFQLSPKHLLLPGNPSSSIQNPDTPAAYFSNHSGISLGCRIPPASRSQRLVPSPLGAGSLTIDTSLETAEFHVAPFGHNGVFLPAGTSSTSDNATKTHIDIYNLELWGFVPDPGVSSSEKSAIELQKAKWDFEAREAERRRSLNIKAGAGDSAMEGARWLLETAGIIGDSHGRGGGSV</sequence>
<comment type="function">
    <text evidence="1">May be involved in a process influencing telomere capping.</text>
</comment>
<comment type="subcellular location">
    <subcellularLocation>
        <location evidence="1">Cytoplasm</location>
    </subcellularLocation>
</comment>
<comment type="similarity">
    <text evidence="4">Belongs to the RTC5 family.</text>
</comment>
<reference key="1">
    <citation type="journal article" date="2015" name="Genome Announc.">
        <title>Genome sequence of Aspergillus flavus NRRL 3357, a strain that causes aflatoxin contamination of food and feed.</title>
        <authorList>
            <person name="Nierman W.C."/>
            <person name="Yu J."/>
            <person name="Fedorova-Abrams N.D."/>
            <person name="Losada L."/>
            <person name="Cleveland T.E."/>
            <person name="Bhatnagar D."/>
            <person name="Bennett J.W."/>
            <person name="Dean R."/>
            <person name="Payne G.A."/>
        </authorList>
    </citation>
    <scope>NUCLEOTIDE SEQUENCE [LARGE SCALE GENOMIC DNA]</scope>
    <source>
        <strain>ATCC 200026 / FGSC A1120 / IAM 13836 / NRRL 3357 / JCM 12722 / SRRC 167</strain>
    </source>
</reference>
<organism>
    <name type="scientific">Aspergillus flavus (strain ATCC 200026 / FGSC A1120 / IAM 13836 / NRRL 3357 / JCM 12722 / SRRC 167)</name>
    <dbReference type="NCBI Taxonomy" id="332952"/>
    <lineage>
        <taxon>Eukaryota</taxon>
        <taxon>Fungi</taxon>
        <taxon>Dikarya</taxon>
        <taxon>Ascomycota</taxon>
        <taxon>Pezizomycotina</taxon>
        <taxon>Eurotiomycetes</taxon>
        <taxon>Eurotiomycetidae</taxon>
        <taxon>Eurotiales</taxon>
        <taxon>Aspergillaceae</taxon>
        <taxon>Aspergillus</taxon>
        <taxon>Aspergillus subgen. Circumdati</taxon>
    </lineage>
</organism>
<feature type="chain" id="PRO_0000408815" description="Restriction of telomere capping protein 5">
    <location>
        <begin position="1"/>
        <end position="629"/>
    </location>
</feature>
<feature type="domain" description="TLDc" evidence="2">
    <location>
        <begin position="348"/>
        <end position="561"/>
    </location>
</feature>
<feature type="region of interest" description="Disordered" evidence="3">
    <location>
        <begin position="147"/>
        <end position="181"/>
    </location>
</feature>
<feature type="region of interest" description="Disordered" evidence="3">
    <location>
        <begin position="315"/>
        <end position="334"/>
    </location>
</feature>
<feature type="compositionally biased region" description="Polar residues" evidence="3">
    <location>
        <begin position="322"/>
        <end position="331"/>
    </location>
</feature>
<protein>
    <recommendedName>
        <fullName>Restriction of telomere capping protein 5</fullName>
    </recommendedName>
</protein>
<evidence type="ECO:0000250" key="1"/>
<evidence type="ECO:0000255" key="2">
    <source>
        <dbReference type="PROSITE-ProRule" id="PRU01234"/>
    </source>
</evidence>
<evidence type="ECO:0000256" key="3">
    <source>
        <dbReference type="SAM" id="MobiDB-lite"/>
    </source>
</evidence>
<evidence type="ECO:0000305" key="4"/>
<gene>
    <name type="primary">rtc5</name>
    <name type="ORF">AFLA_111710</name>
</gene>
<accession>B8N9M5</accession>
<keyword id="KW-0963">Cytoplasm</keyword>